<reference key="1">
    <citation type="journal article" date="2005" name="BMC Biol.">
        <title>The sequence of rice chromosomes 11 and 12, rich in disease resistance genes and recent gene duplications.</title>
        <authorList>
            <consortium name="The rice chromosomes 11 and 12 sequencing consortia"/>
        </authorList>
    </citation>
    <scope>NUCLEOTIDE SEQUENCE [LARGE SCALE GENOMIC DNA]</scope>
    <source>
        <strain>cv. Nipponbare</strain>
    </source>
</reference>
<reference key="2">
    <citation type="journal article" date="2005" name="Nature">
        <title>The map-based sequence of the rice genome.</title>
        <authorList>
            <consortium name="International rice genome sequencing project (IRGSP)"/>
        </authorList>
    </citation>
    <scope>NUCLEOTIDE SEQUENCE [LARGE SCALE GENOMIC DNA]</scope>
    <source>
        <strain>cv. Nipponbare</strain>
    </source>
</reference>
<reference key="3">
    <citation type="journal article" date="2008" name="Nucleic Acids Res.">
        <title>The rice annotation project database (RAP-DB): 2008 update.</title>
        <authorList>
            <consortium name="The rice annotation project (RAP)"/>
        </authorList>
    </citation>
    <scope>GENOME REANNOTATION</scope>
    <source>
        <strain>cv. Nipponbare</strain>
    </source>
</reference>
<reference key="4">
    <citation type="journal article" date="2013" name="Rice">
        <title>Improvement of the Oryza sativa Nipponbare reference genome using next generation sequence and optical map data.</title>
        <authorList>
            <person name="Kawahara Y."/>
            <person name="de la Bastide M."/>
            <person name="Hamilton J.P."/>
            <person name="Kanamori H."/>
            <person name="McCombie W.R."/>
            <person name="Ouyang S."/>
            <person name="Schwartz D.C."/>
            <person name="Tanaka T."/>
            <person name="Wu J."/>
            <person name="Zhou S."/>
            <person name="Childs K.L."/>
            <person name="Davidson R.M."/>
            <person name="Lin H."/>
            <person name="Quesada-Ocampo L."/>
            <person name="Vaillancourt B."/>
            <person name="Sakai H."/>
            <person name="Lee S.S."/>
            <person name="Kim J."/>
            <person name="Numa H."/>
            <person name="Itoh T."/>
            <person name="Buell C.R."/>
            <person name="Matsumoto T."/>
        </authorList>
    </citation>
    <scope>GENOME REANNOTATION</scope>
    <source>
        <strain>cv. Nipponbare</strain>
    </source>
</reference>
<reference key="5">
    <citation type="journal article" date="2005" name="PLoS Biol.">
        <title>The genomes of Oryza sativa: a history of duplications.</title>
        <authorList>
            <person name="Yu J."/>
            <person name="Wang J."/>
            <person name="Lin W."/>
            <person name="Li S."/>
            <person name="Li H."/>
            <person name="Zhou J."/>
            <person name="Ni P."/>
            <person name="Dong W."/>
            <person name="Hu S."/>
            <person name="Zeng C."/>
            <person name="Zhang J."/>
            <person name="Zhang Y."/>
            <person name="Li R."/>
            <person name="Xu Z."/>
            <person name="Li S."/>
            <person name="Li X."/>
            <person name="Zheng H."/>
            <person name="Cong L."/>
            <person name="Lin L."/>
            <person name="Yin J."/>
            <person name="Geng J."/>
            <person name="Li G."/>
            <person name="Shi J."/>
            <person name="Liu J."/>
            <person name="Lv H."/>
            <person name="Li J."/>
            <person name="Wang J."/>
            <person name="Deng Y."/>
            <person name="Ran L."/>
            <person name="Shi X."/>
            <person name="Wang X."/>
            <person name="Wu Q."/>
            <person name="Li C."/>
            <person name="Ren X."/>
            <person name="Wang J."/>
            <person name="Wang X."/>
            <person name="Li D."/>
            <person name="Liu D."/>
            <person name="Zhang X."/>
            <person name="Ji Z."/>
            <person name="Zhao W."/>
            <person name="Sun Y."/>
            <person name="Zhang Z."/>
            <person name="Bao J."/>
            <person name="Han Y."/>
            <person name="Dong L."/>
            <person name="Ji J."/>
            <person name="Chen P."/>
            <person name="Wu S."/>
            <person name="Liu J."/>
            <person name="Xiao Y."/>
            <person name="Bu D."/>
            <person name="Tan J."/>
            <person name="Yang L."/>
            <person name="Ye C."/>
            <person name="Zhang J."/>
            <person name="Xu J."/>
            <person name="Zhou Y."/>
            <person name="Yu Y."/>
            <person name="Zhang B."/>
            <person name="Zhuang S."/>
            <person name="Wei H."/>
            <person name="Liu B."/>
            <person name="Lei M."/>
            <person name="Yu H."/>
            <person name="Li Y."/>
            <person name="Xu H."/>
            <person name="Wei S."/>
            <person name="He X."/>
            <person name="Fang L."/>
            <person name="Zhang Z."/>
            <person name="Zhang Y."/>
            <person name="Huang X."/>
            <person name="Su Z."/>
            <person name="Tong W."/>
            <person name="Li J."/>
            <person name="Tong Z."/>
            <person name="Li S."/>
            <person name="Ye J."/>
            <person name="Wang L."/>
            <person name="Fang L."/>
            <person name="Lei T."/>
            <person name="Chen C.-S."/>
            <person name="Chen H.-C."/>
            <person name="Xu Z."/>
            <person name="Li H."/>
            <person name="Huang H."/>
            <person name="Zhang F."/>
            <person name="Xu H."/>
            <person name="Li N."/>
            <person name="Zhao C."/>
            <person name="Li S."/>
            <person name="Dong L."/>
            <person name="Huang Y."/>
            <person name="Li L."/>
            <person name="Xi Y."/>
            <person name="Qi Q."/>
            <person name="Li W."/>
            <person name="Zhang B."/>
            <person name="Hu W."/>
            <person name="Zhang Y."/>
            <person name="Tian X."/>
            <person name="Jiao Y."/>
            <person name="Liang X."/>
            <person name="Jin J."/>
            <person name="Gao L."/>
            <person name="Zheng W."/>
            <person name="Hao B."/>
            <person name="Liu S.-M."/>
            <person name="Wang W."/>
            <person name="Yuan L."/>
            <person name="Cao M."/>
            <person name="McDermott J."/>
            <person name="Samudrala R."/>
            <person name="Wang J."/>
            <person name="Wong G.K.-S."/>
            <person name="Yang H."/>
        </authorList>
    </citation>
    <scope>NUCLEOTIDE SEQUENCE [LARGE SCALE GENOMIC DNA]</scope>
    <source>
        <strain>cv. Nipponbare</strain>
    </source>
</reference>
<reference key="6">
    <citation type="journal article" date="2013" name="Nature">
        <title>DWARF 53 acts as a repressor of strigolactone signalling in rice.</title>
        <authorList>
            <person name="Jiang L."/>
            <person name="Liu X."/>
            <person name="Xiong G."/>
            <person name="Liu H."/>
            <person name="Chen F."/>
            <person name="Wang L."/>
            <person name="Meng X."/>
            <person name="Liu G."/>
            <person name="Yu H."/>
            <person name="Yuan Y."/>
            <person name="Yi W."/>
            <person name="Zhao L."/>
            <person name="Ma H."/>
            <person name="He Y."/>
            <person name="Wu Z."/>
            <person name="Melcher K."/>
            <person name="Qian Q."/>
            <person name="Xu H.E."/>
            <person name="Wang Y."/>
            <person name="Li J."/>
        </authorList>
    </citation>
    <scope>GENE FAMILY</scope>
</reference>
<name>D53L_ORYSJ</name>
<organism evidence="6">
    <name type="scientific">Oryza sativa subsp. japonica</name>
    <name type="common">Rice</name>
    <dbReference type="NCBI Taxonomy" id="39947"/>
    <lineage>
        <taxon>Eukaryota</taxon>
        <taxon>Viridiplantae</taxon>
        <taxon>Streptophyta</taxon>
        <taxon>Embryophyta</taxon>
        <taxon>Tracheophyta</taxon>
        <taxon>Spermatophyta</taxon>
        <taxon>Magnoliopsida</taxon>
        <taxon>Liliopsida</taxon>
        <taxon>Poales</taxon>
        <taxon>Poaceae</taxon>
        <taxon>BOP clade</taxon>
        <taxon>Oryzoideae</taxon>
        <taxon>Oryzeae</taxon>
        <taxon>Oryzinae</taxon>
        <taxon>Oryza</taxon>
        <taxon>Oryza sativa</taxon>
    </lineage>
</organism>
<dbReference type="EMBL" id="DP000011">
    <property type="protein sequence ID" value="ABA95594.2"/>
    <property type="molecule type" value="Genomic_DNA"/>
</dbReference>
<dbReference type="EMBL" id="AP008218">
    <property type="protein sequence ID" value="BAF28944.1"/>
    <property type="molecule type" value="Genomic_DNA"/>
</dbReference>
<dbReference type="EMBL" id="AP014968">
    <property type="protein sequence ID" value="BAT15475.1"/>
    <property type="molecule type" value="Genomic_DNA"/>
</dbReference>
<dbReference type="EMBL" id="CM000149">
    <property type="protein sequence ID" value="EAZ19354.1"/>
    <property type="status" value="ALT_SEQ"/>
    <property type="molecule type" value="Genomic_DNA"/>
</dbReference>
<dbReference type="RefSeq" id="XP_015620371.1">
    <property type="nucleotide sequence ID" value="XM_015764885.1"/>
</dbReference>
<dbReference type="FunCoup" id="Q2QYW5">
    <property type="interactions" value="1810"/>
</dbReference>
<dbReference type="STRING" id="39947.Q2QYW5"/>
<dbReference type="PaxDb" id="39947-Q2QYW5"/>
<dbReference type="EnsemblPlants" id="Os12t0104300-01">
    <property type="protein sequence ID" value="Os12t0104300-01"/>
    <property type="gene ID" value="Os12g0104300"/>
</dbReference>
<dbReference type="Gramene" id="Os12t0104300-01">
    <property type="protein sequence ID" value="Os12t0104300-01"/>
    <property type="gene ID" value="Os12g0104300"/>
</dbReference>
<dbReference type="KEGG" id="dosa:Os12g0104300"/>
<dbReference type="eggNOG" id="KOG1051">
    <property type="taxonomic scope" value="Eukaryota"/>
</dbReference>
<dbReference type="HOGENOM" id="CLU_006575_0_1_1"/>
<dbReference type="InParanoid" id="Q2QYW5"/>
<dbReference type="OMA" id="VCKGNGS"/>
<dbReference type="OrthoDB" id="1723324at2759"/>
<dbReference type="Proteomes" id="UP000000763">
    <property type="component" value="Chromosome 12"/>
</dbReference>
<dbReference type="Proteomes" id="UP000007752">
    <property type="component" value="Chromosome 12"/>
</dbReference>
<dbReference type="Proteomes" id="UP000059680">
    <property type="component" value="Chromosome 12"/>
</dbReference>
<dbReference type="ExpressionAtlas" id="Q2QYW5">
    <property type="expression patterns" value="baseline and differential"/>
</dbReference>
<dbReference type="CDD" id="cd19499">
    <property type="entry name" value="RecA-like_ClpB_Hsp104-like"/>
    <property type="match status" value="1"/>
</dbReference>
<dbReference type="Gene3D" id="1.10.1780.10">
    <property type="entry name" value="Clp, N-terminal domain"/>
    <property type="match status" value="1"/>
</dbReference>
<dbReference type="Gene3D" id="3.40.50.300">
    <property type="entry name" value="P-loop containing nucleotide triphosphate hydrolases"/>
    <property type="match status" value="1"/>
</dbReference>
<dbReference type="InterPro" id="IPR036628">
    <property type="entry name" value="Clp_N_dom_sf"/>
</dbReference>
<dbReference type="InterPro" id="IPR004176">
    <property type="entry name" value="Clp_R_dom"/>
</dbReference>
<dbReference type="InterPro" id="IPR027417">
    <property type="entry name" value="P-loop_NTPase"/>
</dbReference>
<dbReference type="InterPro" id="IPR051650">
    <property type="entry name" value="SL_signaling_regulator"/>
</dbReference>
<dbReference type="PANTHER" id="PTHR43572">
    <property type="entry name" value="CHAPERONE PROTEIN CLPD, CHLOROPLASTIC"/>
    <property type="match status" value="1"/>
</dbReference>
<dbReference type="PANTHER" id="PTHR43572:SF38">
    <property type="entry name" value="PROTEIN SMAX1-LIKE 6"/>
    <property type="match status" value="1"/>
</dbReference>
<dbReference type="Pfam" id="PF02861">
    <property type="entry name" value="Clp_N"/>
    <property type="match status" value="2"/>
</dbReference>
<dbReference type="SUPFAM" id="SSF52540">
    <property type="entry name" value="P-loop containing nucleoside triphosphate hydrolases"/>
    <property type="match status" value="1"/>
</dbReference>
<dbReference type="PROSITE" id="PS51903">
    <property type="entry name" value="CLP_R"/>
    <property type="match status" value="1"/>
</dbReference>
<protein>
    <recommendedName>
        <fullName evidence="4">Protein DWARF 53-LIKE</fullName>
    </recommendedName>
</protein>
<comment type="function">
    <text evidence="1">Repressor of strigolactones (SL) signaling. Subjected to a negative feedback control of SL signaling.</text>
</comment>
<comment type="domain">
    <text evidence="5">Contains 3 EAR motifs associated with active repression of several target genes.</text>
</comment>
<comment type="PTM">
    <text evidence="1">Polyubiquitinated. Strigolactone, but not karrikin, triggers rapid SCF(D3)-dependent degradation via the proteasome.</text>
</comment>
<comment type="similarity">
    <text evidence="5">Belongs to the ClpA/ClpB family.</text>
</comment>
<comment type="sequence caution" evidence="5">
    <conflict type="erroneous gene model prediction">
        <sequence resource="EMBL-CDS" id="EAZ19354"/>
    </conflict>
</comment>
<sequence>MPTPVAAARQCLSPAAVPALDAAVASARRRAHAQTTSLHLISSLLAPPAPPLLRDALARARSAAYSPRVQLKALDLCFAVSLDRLPSVSASSSSGAADEPPVSNSLMAAIKRSQANQRRNPDTFHFYHQAATAQTPAAVKVELSHLVLAILDDPVVSRVFAEAGFRSGDIKLAILRPAPPMPLLGRLPTRTRPPPLFLCSFAAADDADVPSPAGNLAGAGEENCRRIAEILSRGRNPMLVGVGAASAADDFAAASPYRIIHVDPNTIDRSDLGVAAAMASATSGLIISIGDLKQLVPDEDAEAQENGRRVVAEVTRVLEAHSKVGRVWVMGWSATYETYLAFLSKFPLVDKDWDLQLLPITAVHAAPAAAGPAAAGGLMPPATTVAAFSKPAASLMDSFVPFGGFLCDNYEENSLTANSCPQALRCQQCNDKYEQEVATIISASGITAEDHHQGGLPSLLQNGSMMGPNNGFDPVKVRDDRMVLNSKILNLQKKWNEYCLRLHQDCQRINRDPYKPFPRYIGVPADKERSANPSKGSESIGVQKDVIKPCAVSAVHSSSTARPISSPSVTNKRNEDLVLNLQARHSKSDENLQERGMQSQHGTLSNADNPDDHASPSSAAPVETDLVLCTPRDCSSKGSSSTCSKRVEDSERSVHLVPKKVDDLNLKHPQLSVQPNSCSWSSINVGKTSHSTLHSVASGGFSAFGQWQKRSPLAAQNSDLSNYKLLVERLFKVVGRQEEAVSAICESIVRCRSTESRRGPSRNDIWLCFHGSDSMAKKRIAVALAELMHGSKENLIYLDLNLQDWDDSSFRGKTGIDCIVEQLSKKRRSVLFLDNIDRADCLVQDSLSDAIKSGRFQDMRGKVVDINDSIVVLSRSMIHGSKNGLEEGLSFSEEKILATRGHRLKILVEPGRAITSGCPSGKVVVSPRHFLTKIQASLCSGSISKRKLSMSDDQEKLQESPSSLKRLHRTSSIPFDLNLPVDEDEPFDADDDSSSHENSYGNTEKSIDALLHSVDGSINFKPFDFDKLADDMLQEFSNILRKNLGAECMLEIDVGAMEQILAAAWKSEDKGPVQTWLEQVFARSLDELKLKYKHVSSSTLRLVPCEDTLPTVKGDGLGVLLPPRIILDC</sequence>
<feature type="chain" id="PRO_0000435719" description="Protein DWARF 53-LIKE">
    <location>
        <begin position="1"/>
        <end position="1129"/>
    </location>
</feature>
<feature type="domain" description="Clp R" evidence="2">
    <location>
        <begin position="8"/>
        <end position="180"/>
    </location>
</feature>
<feature type="region of interest" description="Repeat 1" evidence="2">
    <location>
        <begin position="12"/>
        <end position="85"/>
    </location>
</feature>
<feature type="region of interest" description="Repeat 2" evidence="2">
    <location>
        <begin position="102"/>
        <end position="180"/>
    </location>
</feature>
<feature type="region of interest" description="Disordered" evidence="3">
    <location>
        <begin position="519"/>
        <end position="573"/>
    </location>
</feature>
<feature type="region of interest" description="Disordered" evidence="3">
    <location>
        <begin position="587"/>
        <end position="654"/>
    </location>
</feature>
<feature type="region of interest" description="Disordered" evidence="3">
    <location>
        <begin position="975"/>
        <end position="1001"/>
    </location>
</feature>
<feature type="short sequence motif" description="EAR 1" evidence="5">
    <location>
        <begin position="577"/>
        <end position="581"/>
    </location>
</feature>
<feature type="short sequence motif" description="EAR 2" evidence="5">
    <location>
        <begin position="798"/>
        <end position="802"/>
    </location>
</feature>
<feature type="short sequence motif" description="EAR 3" evidence="5">
    <location>
        <begin position="975"/>
        <end position="980"/>
    </location>
</feature>
<feature type="compositionally biased region" description="Low complexity" evidence="3">
    <location>
        <begin position="557"/>
        <end position="568"/>
    </location>
</feature>
<feature type="compositionally biased region" description="Polar residues" evidence="3">
    <location>
        <begin position="596"/>
        <end position="608"/>
    </location>
</feature>
<feature type="compositionally biased region" description="Basic and acidic residues" evidence="3">
    <location>
        <begin position="645"/>
        <end position="654"/>
    </location>
</feature>
<feature type="compositionally biased region" description="Acidic residues" evidence="3">
    <location>
        <begin position="981"/>
        <end position="992"/>
    </location>
</feature>
<accession>Q2QYW5</accession>
<accession>A3CE41</accession>
<evidence type="ECO:0000250" key="1">
    <source>
        <dbReference type="UniProtKB" id="Q2RBP2"/>
    </source>
</evidence>
<evidence type="ECO:0000255" key="2">
    <source>
        <dbReference type="PROSITE-ProRule" id="PRU01251"/>
    </source>
</evidence>
<evidence type="ECO:0000256" key="3">
    <source>
        <dbReference type="SAM" id="MobiDB-lite"/>
    </source>
</evidence>
<evidence type="ECO:0000303" key="4">
    <source>
    </source>
</evidence>
<evidence type="ECO:0000305" key="5"/>
<evidence type="ECO:0000312" key="6">
    <source>
        <dbReference type="EMBL" id="ABA95594.2"/>
    </source>
</evidence>
<evidence type="ECO:0000312" key="7">
    <source>
        <dbReference type="EMBL" id="BAF28944.1"/>
    </source>
</evidence>
<evidence type="ECO:0000312" key="8">
    <source>
        <dbReference type="EMBL" id="EAZ19354.1"/>
    </source>
</evidence>
<keyword id="KW-1185">Reference proteome</keyword>
<keyword id="KW-0677">Repeat</keyword>
<keyword id="KW-0832">Ubl conjugation</keyword>
<proteinExistence type="inferred from homology"/>
<gene>
    <name evidence="5" type="primary">D53-L</name>
    <name evidence="6" type="ordered locus">LOC_Os12g01360</name>
    <name evidence="7" type="ordered locus">Os12g0104300</name>
    <name evidence="8" type="ORF">OsJ_34905</name>
</gene>